<name>AES_SALCH</name>
<organism>
    <name type="scientific">Salmonella choleraesuis (strain SC-B67)</name>
    <dbReference type="NCBI Taxonomy" id="321314"/>
    <lineage>
        <taxon>Bacteria</taxon>
        <taxon>Pseudomonadati</taxon>
        <taxon>Pseudomonadota</taxon>
        <taxon>Gammaproteobacteria</taxon>
        <taxon>Enterobacterales</taxon>
        <taxon>Enterobacteriaceae</taxon>
        <taxon>Salmonella</taxon>
    </lineage>
</organism>
<reference key="1">
    <citation type="journal article" date="2005" name="Nucleic Acids Res.">
        <title>The genome sequence of Salmonella enterica serovar Choleraesuis, a highly invasive and resistant zoonotic pathogen.</title>
        <authorList>
            <person name="Chiu C.-H."/>
            <person name="Tang P."/>
            <person name="Chu C."/>
            <person name="Hu S."/>
            <person name="Bao Q."/>
            <person name="Yu J."/>
            <person name="Chou Y.-Y."/>
            <person name="Wang H.-S."/>
            <person name="Lee Y.-S."/>
        </authorList>
    </citation>
    <scope>NUCLEOTIDE SEQUENCE [LARGE SCALE GENOMIC DNA]</scope>
    <source>
        <strain>SC-B67</strain>
    </source>
</reference>
<evidence type="ECO:0000250" key="1">
    <source>
        <dbReference type="UniProtKB" id="Q5NUF3"/>
    </source>
</evidence>
<evidence type="ECO:0000255" key="2">
    <source>
        <dbReference type="HAMAP-Rule" id="MF_01958"/>
    </source>
</evidence>
<dbReference type="EC" id="3.1.1.-" evidence="2"/>
<dbReference type="EMBL" id="AE017220">
    <property type="protein sequence ID" value="AAX64438.1"/>
    <property type="molecule type" value="Genomic_DNA"/>
</dbReference>
<dbReference type="RefSeq" id="WP_001539341.1">
    <property type="nucleotide sequence ID" value="NC_006905.1"/>
</dbReference>
<dbReference type="SMR" id="Q57S73"/>
<dbReference type="ESTHER" id="salty-AES">
    <property type="family name" value="Acetyl_esterase"/>
</dbReference>
<dbReference type="KEGG" id="sec:SCH_0532"/>
<dbReference type="HOGENOM" id="CLU_012494_6_4_6"/>
<dbReference type="Proteomes" id="UP000000538">
    <property type="component" value="Chromosome"/>
</dbReference>
<dbReference type="GO" id="GO:0005737">
    <property type="term" value="C:cytoplasm"/>
    <property type="evidence" value="ECO:0007669"/>
    <property type="project" value="UniProtKB-SubCell"/>
</dbReference>
<dbReference type="GO" id="GO:0052689">
    <property type="term" value="F:carboxylic ester hydrolase activity"/>
    <property type="evidence" value="ECO:0007669"/>
    <property type="project" value="UniProtKB-UniRule"/>
</dbReference>
<dbReference type="FunFam" id="3.40.50.1820:FF:000035">
    <property type="entry name" value="Acetyl esterase"/>
    <property type="match status" value="1"/>
</dbReference>
<dbReference type="Gene3D" id="3.40.50.1820">
    <property type="entry name" value="alpha/beta hydrolase"/>
    <property type="match status" value="1"/>
</dbReference>
<dbReference type="HAMAP" id="MF_01958">
    <property type="entry name" value="Acetyl_esterase"/>
    <property type="match status" value="1"/>
</dbReference>
<dbReference type="InterPro" id="IPR013094">
    <property type="entry name" value="AB_hydrolase_3"/>
</dbReference>
<dbReference type="InterPro" id="IPR029058">
    <property type="entry name" value="AB_hydrolase_fold"/>
</dbReference>
<dbReference type="InterPro" id="IPR023508">
    <property type="entry name" value="Acetyl_esterase"/>
</dbReference>
<dbReference type="InterPro" id="IPR050300">
    <property type="entry name" value="GDXG_lipolytic_enzyme"/>
</dbReference>
<dbReference type="InterPro" id="IPR033140">
    <property type="entry name" value="Lipase_GDXG_put_SER_AS"/>
</dbReference>
<dbReference type="NCBIfam" id="NF007547">
    <property type="entry name" value="PRK10162.1"/>
    <property type="match status" value="1"/>
</dbReference>
<dbReference type="PANTHER" id="PTHR48081">
    <property type="entry name" value="AB HYDROLASE SUPERFAMILY PROTEIN C4A8.06C"/>
    <property type="match status" value="1"/>
</dbReference>
<dbReference type="PANTHER" id="PTHR48081:SF8">
    <property type="entry name" value="ALPHA_BETA HYDROLASE FOLD-3 DOMAIN-CONTAINING PROTEIN-RELATED"/>
    <property type="match status" value="1"/>
</dbReference>
<dbReference type="Pfam" id="PF07859">
    <property type="entry name" value="Abhydrolase_3"/>
    <property type="match status" value="1"/>
</dbReference>
<dbReference type="SUPFAM" id="SSF53474">
    <property type="entry name" value="alpha/beta-Hydrolases"/>
    <property type="match status" value="1"/>
</dbReference>
<dbReference type="PROSITE" id="PS01174">
    <property type="entry name" value="LIPASE_GDXG_SER"/>
    <property type="match status" value="1"/>
</dbReference>
<gene>
    <name evidence="2" type="primary">aes</name>
    <name type="ordered locus">SCH_0532</name>
</gene>
<feature type="chain" id="PRO_0000239708" description="Acetyl esterase">
    <location>
        <begin position="1"/>
        <end position="323"/>
    </location>
</feature>
<feature type="short sequence motif" description="Involved in the stabilization of the negatively charged intermediate by the formation of the oxyanion hole" evidence="1">
    <location>
        <begin position="91"/>
        <end position="93"/>
    </location>
</feature>
<feature type="active site" evidence="2">
    <location>
        <position position="165"/>
    </location>
</feature>
<feature type="active site" evidence="2">
    <location>
        <position position="262"/>
    </location>
</feature>
<feature type="active site" evidence="2">
    <location>
        <position position="292"/>
    </location>
</feature>
<comment type="function">
    <text evidence="2">Displays esterase activity towards short chain fatty esters (acyl chain length of up to 8 carbons). Able to hydrolyze triacetylglycerol (triacetin) and tributyrylglycerol (tributyrin), but not trioleylglycerol (triolein) or cholesterol oleate. Negatively regulates MalT activity by antagonizing maltotriose binding. Inhibits MelA galactosidase activity.</text>
</comment>
<comment type="subunit">
    <text evidence="2">Homodimer. Interacts with MalT and MelA.</text>
</comment>
<comment type="subcellular location">
    <subcellularLocation>
        <location evidence="2">Cytoplasm</location>
    </subcellularLocation>
</comment>
<comment type="similarity">
    <text evidence="2">Belongs to the 'GDXG' lipolytic enzyme family.</text>
</comment>
<protein>
    <recommendedName>
        <fullName evidence="2">Acetyl esterase</fullName>
        <ecNumber evidence="2">3.1.1.-</ecNumber>
    </recommendedName>
</protein>
<proteinExistence type="inferred from homology"/>
<accession>Q57S73</accession>
<keyword id="KW-0963">Cytoplasm</keyword>
<keyword id="KW-0378">Hydrolase</keyword>
<keyword id="KW-0719">Serine esterase</keyword>
<sequence length="323" mass="36840">MKPENKIPVLTRLSDEMKAVVNFQQPGLPPWPADGDIETQRQYYLLERRFWNADAPSMTTRTCAVPTPYGDVTTRLYSPQPTSQATLYYLHGGGFILGNLDTHDRIMRLLARYTGCTVIGIDYSLSPQARYPQAIEETVAVCSYFSQHADEYSLNVEKIGFAGDSAGAMLALASALWLRDKHIRCGNLIAILLWYGLYGLQDSVSRRLFGGAWDGLTREDLDMYEKAYLRNDEDRESPWYCLFNNDLTRDVPPCFIASAEFDPLIDDSRLLHQTLQAHQQPCEYKMYPGTLHAFLHYSRMMTIADDALQDGARFFMARMKTPR</sequence>